<accession>Q5PC82</accession>
<name>CCA_SALPA</name>
<feature type="chain" id="PRO_0000138998" description="Multifunctional CCA protein">
    <location>
        <begin position="1"/>
        <end position="413"/>
    </location>
</feature>
<feature type="domain" description="HD" evidence="1">
    <location>
        <begin position="228"/>
        <end position="329"/>
    </location>
</feature>
<feature type="binding site" evidence="1">
    <location>
        <position position="8"/>
    </location>
    <ligand>
        <name>ATP</name>
        <dbReference type="ChEBI" id="CHEBI:30616"/>
    </ligand>
</feature>
<feature type="binding site" evidence="1">
    <location>
        <position position="8"/>
    </location>
    <ligand>
        <name>CTP</name>
        <dbReference type="ChEBI" id="CHEBI:37563"/>
    </ligand>
</feature>
<feature type="binding site" evidence="1">
    <location>
        <position position="11"/>
    </location>
    <ligand>
        <name>ATP</name>
        <dbReference type="ChEBI" id="CHEBI:30616"/>
    </ligand>
</feature>
<feature type="binding site" evidence="1">
    <location>
        <position position="11"/>
    </location>
    <ligand>
        <name>CTP</name>
        <dbReference type="ChEBI" id="CHEBI:37563"/>
    </ligand>
</feature>
<feature type="binding site" evidence="1">
    <location>
        <position position="21"/>
    </location>
    <ligand>
        <name>Mg(2+)</name>
        <dbReference type="ChEBI" id="CHEBI:18420"/>
    </ligand>
</feature>
<feature type="binding site" evidence="1">
    <location>
        <position position="23"/>
    </location>
    <ligand>
        <name>Mg(2+)</name>
        <dbReference type="ChEBI" id="CHEBI:18420"/>
    </ligand>
</feature>
<feature type="binding site" evidence="1">
    <location>
        <position position="91"/>
    </location>
    <ligand>
        <name>ATP</name>
        <dbReference type="ChEBI" id="CHEBI:30616"/>
    </ligand>
</feature>
<feature type="binding site" evidence="1">
    <location>
        <position position="91"/>
    </location>
    <ligand>
        <name>CTP</name>
        <dbReference type="ChEBI" id="CHEBI:37563"/>
    </ligand>
</feature>
<feature type="binding site" evidence="1">
    <location>
        <position position="137"/>
    </location>
    <ligand>
        <name>ATP</name>
        <dbReference type="ChEBI" id="CHEBI:30616"/>
    </ligand>
</feature>
<feature type="binding site" evidence="1">
    <location>
        <position position="137"/>
    </location>
    <ligand>
        <name>CTP</name>
        <dbReference type="ChEBI" id="CHEBI:37563"/>
    </ligand>
</feature>
<feature type="binding site" evidence="1">
    <location>
        <position position="140"/>
    </location>
    <ligand>
        <name>ATP</name>
        <dbReference type="ChEBI" id="CHEBI:30616"/>
    </ligand>
</feature>
<feature type="binding site" evidence="1">
    <location>
        <position position="140"/>
    </location>
    <ligand>
        <name>CTP</name>
        <dbReference type="ChEBI" id="CHEBI:37563"/>
    </ligand>
</feature>
<reference key="1">
    <citation type="journal article" date="2004" name="Nat. Genet.">
        <title>Comparison of genome degradation in Paratyphi A and Typhi, human-restricted serovars of Salmonella enterica that cause typhoid.</title>
        <authorList>
            <person name="McClelland M."/>
            <person name="Sanderson K.E."/>
            <person name="Clifton S.W."/>
            <person name="Latreille P."/>
            <person name="Porwollik S."/>
            <person name="Sabo A."/>
            <person name="Meyer R."/>
            <person name="Bieri T."/>
            <person name="Ozersky P."/>
            <person name="McLellan M."/>
            <person name="Harkins C.R."/>
            <person name="Wang C."/>
            <person name="Nguyen C."/>
            <person name="Berghoff A."/>
            <person name="Elliott G."/>
            <person name="Kohlberg S."/>
            <person name="Strong C."/>
            <person name="Du F."/>
            <person name="Carter J."/>
            <person name="Kremizki C."/>
            <person name="Layman D."/>
            <person name="Leonard S."/>
            <person name="Sun H."/>
            <person name="Fulton L."/>
            <person name="Nash W."/>
            <person name="Miner T."/>
            <person name="Minx P."/>
            <person name="Delehaunty K."/>
            <person name="Fronick C."/>
            <person name="Magrini V."/>
            <person name="Nhan M."/>
            <person name="Warren W."/>
            <person name="Florea L."/>
            <person name="Spieth J."/>
            <person name="Wilson R.K."/>
        </authorList>
    </citation>
    <scope>NUCLEOTIDE SEQUENCE [LARGE SCALE GENOMIC DNA]</scope>
    <source>
        <strain>ATCC 9150 / SARB42</strain>
    </source>
</reference>
<gene>
    <name evidence="1" type="primary">cca</name>
    <name type="ordered locus">SPA3072</name>
</gene>
<keyword id="KW-0067">ATP-binding</keyword>
<keyword id="KW-0378">Hydrolase</keyword>
<keyword id="KW-0460">Magnesium</keyword>
<keyword id="KW-0479">Metal-binding</keyword>
<keyword id="KW-0511">Multifunctional enzyme</keyword>
<keyword id="KW-0533">Nickel</keyword>
<keyword id="KW-0547">Nucleotide-binding</keyword>
<keyword id="KW-0548">Nucleotidyltransferase</keyword>
<keyword id="KW-0692">RNA repair</keyword>
<keyword id="KW-0694">RNA-binding</keyword>
<keyword id="KW-0808">Transferase</keyword>
<keyword id="KW-0819">tRNA processing</keyword>
<proteinExistence type="inferred from homology"/>
<dbReference type="EC" id="2.7.7.72" evidence="1"/>
<dbReference type="EC" id="3.1.3.-" evidence="1"/>
<dbReference type="EC" id="3.1.4.-" evidence="1"/>
<dbReference type="EMBL" id="CP000026">
    <property type="protein sequence ID" value="AAV78907.1"/>
    <property type="molecule type" value="Genomic_DNA"/>
</dbReference>
<dbReference type="RefSeq" id="WP_000708461.1">
    <property type="nucleotide sequence ID" value="NC_006511.1"/>
</dbReference>
<dbReference type="SMR" id="Q5PC82"/>
<dbReference type="KEGG" id="spt:SPA3072"/>
<dbReference type="HOGENOM" id="CLU_015961_1_1_6"/>
<dbReference type="Proteomes" id="UP000008185">
    <property type="component" value="Chromosome"/>
</dbReference>
<dbReference type="GO" id="GO:0005524">
    <property type="term" value="F:ATP binding"/>
    <property type="evidence" value="ECO:0007669"/>
    <property type="project" value="UniProtKB-UniRule"/>
</dbReference>
<dbReference type="GO" id="GO:0004810">
    <property type="term" value="F:CCA tRNA nucleotidyltransferase activity"/>
    <property type="evidence" value="ECO:0007669"/>
    <property type="project" value="UniProtKB-UniRule"/>
</dbReference>
<dbReference type="GO" id="GO:0004112">
    <property type="term" value="F:cyclic-nucleotide phosphodiesterase activity"/>
    <property type="evidence" value="ECO:0007669"/>
    <property type="project" value="UniProtKB-UniRule"/>
</dbReference>
<dbReference type="GO" id="GO:0000287">
    <property type="term" value="F:magnesium ion binding"/>
    <property type="evidence" value="ECO:0007669"/>
    <property type="project" value="UniProtKB-UniRule"/>
</dbReference>
<dbReference type="GO" id="GO:0016791">
    <property type="term" value="F:phosphatase activity"/>
    <property type="evidence" value="ECO:0007669"/>
    <property type="project" value="UniProtKB-UniRule"/>
</dbReference>
<dbReference type="GO" id="GO:0000049">
    <property type="term" value="F:tRNA binding"/>
    <property type="evidence" value="ECO:0007669"/>
    <property type="project" value="UniProtKB-UniRule"/>
</dbReference>
<dbReference type="GO" id="GO:0042245">
    <property type="term" value="P:RNA repair"/>
    <property type="evidence" value="ECO:0007669"/>
    <property type="project" value="UniProtKB-KW"/>
</dbReference>
<dbReference type="GO" id="GO:0001680">
    <property type="term" value="P:tRNA 3'-terminal CCA addition"/>
    <property type="evidence" value="ECO:0007669"/>
    <property type="project" value="UniProtKB-UniRule"/>
</dbReference>
<dbReference type="CDD" id="cd00077">
    <property type="entry name" value="HDc"/>
    <property type="match status" value="1"/>
</dbReference>
<dbReference type="CDD" id="cd05398">
    <property type="entry name" value="NT_ClassII-CCAase"/>
    <property type="match status" value="1"/>
</dbReference>
<dbReference type="FunFam" id="1.10.3090.10:FF:000001">
    <property type="entry name" value="Multifunctional CCA protein"/>
    <property type="match status" value="1"/>
</dbReference>
<dbReference type="FunFam" id="3.30.460.10:FF:000016">
    <property type="entry name" value="Multifunctional CCA protein"/>
    <property type="match status" value="1"/>
</dbReference>
<dbReference type="Gene3D" id="3.30.460.10">
    <property type="entry name" value="Beta Polymerase, domain 2"/>
    <property type="match status" value="1"/>
</dbReference>
<dbReference type="Gene3D" id="1.10.3090.10">
    <property type="entry name" value="cca-adding enzyme, domain 2"/>
    <property type="match status" value="1"/>
</dbReference>
<dbReference type="HAMAP" id="MF_01261">
    <property type="entry name" value="CCA_bact_type1"/>
    <property type="match status" value="1"/>
</dbReference>
<dbReference type="HAMAP" id="MF_01262">
    <property type="entry name" value="CCA_bact_type2"/>
    <property type="match status" value="1"/>
</dbReference>
<dbReference type="InterPro" id="IPR012006">
    <property type="entry name" value="CCA_bact"/>
</dbReference>
<dbReference type="InterPro" id="IPR003607">
    <property type="entry name" value="HD/PDEase_dom"/>
</dbReference>
<dbReference type="InterPro" id="IPR006674">
    <property type="entry name" value="HD_domain"/>
</dbReference>
<dbReference type="InterPro" id="IPR043519">
    <property type="entry name" value="NT_sf"/>
</dbReference>
<dbReference type="InterPro" id="IPR002646">
    <property type="entry name" value="PolA_pol_head_dom"/>
</dbReference>
<dbReference type="InterPro" id="IPR032828">
    <property type="entry name" value="PolyA_RNA-bd"/>
</dbReference>
<dbReference type="InterPro" id="IPR050124">
    <property type="entry name" value="tRNA_CCA-adding_enzyme"/>
</dbReference>
<dbReference type="NCBIfam" id="NF008137">
    <property type="entry name" value="PRK10885.1"/>
    <property type="match status" value="1"/>
</dbReference>
<dbReference type="PANTHER" id="PTHR47545">
    <property type="entry name" value="MULTIFUNCTIONAL CCA PROTEIN"/>
    <property type="match status" value="1"/>
</dbReference>
<dbReference type="PANTHER" id="PTHR47545:SF1">
    <property type="entry name" value="MULTIFUNCTIONAL CCA PROTEIN"/>
    <property type="match status" value="1"/>
</dbReference>
<dbReference type="Pfam" id="PF01966">
    <property type="entry name" value="HD"/>
    <property type="match status" value="1"/>
</dbReference>
<dbReference type="Pfam" id="PF01743">
    <property type="entry name" value="PolyA_pol"/>
    <property type="match status" value="1"/>
</dbReference>
<dbReference type="Pfam" id="PF12627">
    <property type="entry name" value="PolyA_pol_RNAbd"/>
    <property type="match status" value="1"/>
</dbReference>
<dbReference type="PIRSF" id="PIRSF000813">
    <property type="entry name" value="CCA_bact"/>
    <property type="match status" value="1"/>
</dbReference>
<dbReference type="SMART" id="SM00471">
    <property type="entry name" value="HDc"/>
    <property type="match status" value="1"/>
</dbReference>
<dbReference type="SUPFAM" id="SSF81301">
    <property type="entry name" value="Nucleotidyltransferase"/>
    <property type="match status" value="1"/>
</dbReference>
<dbReference type="SUPFAM" id="SSF81891">
    <property type="entry name" value="Poly A polymerase C-terminal region-like"/>
    <property type="match status" value="1"/>
</dbReference>
<dbReference type="PROSITE" id="PS51831">
    <property type="entry name" value="HD"/>
    <property type="match status" value="1"/>
</dbReference>
<comment type="function">
    <text evidence="1">Catalyzes the addition and repair of the essential 3'-terminal CCA sequence in tRNAs without using a nucleic acid template. Adds these three nucleotides in the order of C, C, and A to the tRNA nucleotide-73, using CTP and ATP as substrates and producing inorganic pyrophosphate. tRNA 3'-terminal CCA addition is required both for tRNA processing and repair. Also involved in tRNA surveillance by mediating tandem CCA addition to generate a CCACCA at the 3' terminus of unstable tRNAs. While stable tRNAs receive only 3'-terminal CCA, unstable tRNAs are marked with CCACCA and rapidly degraded.</text>
</comment>
<comment type="catalytic activity">
    <reaction evidence="1">
        <text>a tRNA precursor + 2 CTP + ATP = a tRNA with a 3' CCA end + 3 diphosphate</text>
        <dbReference type="Rhea" id="RHEA:14433"/>
        <dbReference type="Rhea" id="RHEA-COMP:10465"/>
        <dbReference type="Rhea" id="RHEA-COMP:10468"/>
        <dbReference type="ChEBI" id="CHEBI:30616"/>
        <dbReference type="ChEBI" id="CHEBI:33019"/>
        <dbReference type="ChEBI" id="CHEBI:37563"/>
        <dbReference type="ChEBI" id="CHEBI:74896"/>
        <dbReference type="ChEBI" id="CHEBI:83071"/>
        <dbReference type="EC" id="2.7.7.72"/>
    </reaction>
</comment>
<comment type="catalytic activity">
    <reaction evidence="1">
        <text>a tRNA with a 3' CCA end + 2 CTP + ATP = a tRNA with a 3' CCACCA end + 3 diphosphate</text>
        <dbReference type="Rhea" id="RHEA:76235"/>
        <dbReference type="Rhea" id="RHEA-COMP:10468"/>
        <dbReference type="Rhea" id="RHEA-COMP:18655"/>
        <dbReference type="ChEBI" id="CHEBI:30616"/>
        <dbReference type="ChEBI" id="CHEBI:33019"/>
        <dbReference type="ChEBI" id="CHEBI:37563"/>
        <dbReference type="ChEBI" id="CHEBI:83071"/>
        <dbReference type="ChEBI" id="CHEBI:195187"/>
    </reaction>
    <physiologicalReaction direction="left-to-right" evidence="1">
        <dbReference type="Rhea" id="RHEA:76236"/>
    </physiologicalReaction>
</comment>
<comment type="cofactor">
    <cofactor evidence="1">
        <name>Mg(2+)</name>
        <dbReference type="ChEBI" id="CHEBI:18420"/>
    </cofactor>
    <text evidence="1">Magnesium is required for nucleotidyltransferase activity.</text>
</comment>
<comment type="cofactor">
    <cofactor evidence="1">
        <name>Ni(2+)</name>
        <dbReference type="ChEBI" id="CHEBI:49786"/>
    </cofactor>
    <text evidence="1">Nickel for phosphatase activity.</text>
</comment>
<comment type="subunit">
    <text evidence="1">Monomer. Can also form homodimers and oligomers.</text>
</comment>
<comment type="domain">
    <text evidence="1">Comprises two domains: an N-terminal domain containing the nucleotidyltransferase activity and a C-terminal HD domain associated with both phosphodiesterase and phosphatase activities.</text>
</comment>
<comment type="miscellaneous">
    <text evidence="1">A single active site specifically recognizes both ATP and CTP and is responsible for their addition.</text>
</comment>
<comment type="similarity">
    <text evidence="1">Belongs to the tRNA nucleotidyltransferase/poly(A) polymerase family. Bacterial CCA-adding enzyme type 1 subfamily.</text>
</comment>
<evidence type="ECO:0000255" key="1">
    <source>
        <dbReference type="HAMAP-Rule" id="MF_01261"/>
    </source>
</evidence>
<sequence length="413" mass="46606">MKIYLVGGAVRDALLGLPVKDKDWVVVGATPQEMLDAGYQQVGRDFPVFLHPQTHEEYALARTERKSGSGYTGFTCYTAPDVTLEADLQRRDLTINALARDDDGQIIDPYHGRRDLEARLLRHVSPAFGEDPLRVLRVARFAARYAHLSFRIADETLALMREMTAAGELEHLTPERVWKETENALTTRNPQVYFQVLRDCGALRVLFPEIDALFGVPAPAKWHPEIDTGVHTLMTLSMAAMLSPQLDVRFATLCHDLGKGLTPKNLWPRHHGHGPAGVKLVEQLCQRLRVPNDLRDLAKLVAEYHDLIHTFPILQPKTIVKLFDAIDAWRKPQRVEQIALTSEADVRGRTGFEASDYPQGRWLREAWQVAQAVPTKEVVEAGFKGIEIREELTKRRIAAVANWKEKRCPNPAS</sequence>
<organism>
    <name type="scientific">Salmonella paratyphi A (strain ATCC 9150 / SARB42)</name>
    <dbReference type="NCBI Taxonomy" id="295319"/>
    <lineage>
        <taxon>Bacteria</taxon>
        <taxon>Pseudomonadati</taxon>
        <taxon>Pseudomonadota</taxon>
        <taxon>Gammaproteobacteria</taxon>
        <taxon>Enterobacterales</taxon>
        <taxon>Enterobacteriaceae</taxon>
        <taxon>Salmonella</taxon>
    </lineage>
</organism>
<protein>
    <recommendedName>
        <fullName evidence="1">Multifunctional CCA protein</fullName>
    </recommendedName>
    <domain>
        <recommendedName>
            <fullName evidence="1">CCA-adding enzyme</fullName>
            <ecNumber evidence="1">2.7.7.72</ecNumber>
        </recommendedName>
        <alternativeName>
            <fullName evidence="1">CCA tRNA nucleotidyltransferase</fullName>
        </alternativeName>
        <alternativeName>
            <fullName evidence="1">tRNA CCA-pyrophosphorylase</fullName>
        </alternativeName>
        <alternativeName>
            <fullName evidence="1">tRNA adenylyl-/cytidylyl-transferase</fullName>
        </alternativeName>
        <alternativeName>
            <fullName evidence="1">tRNA nucleotidyltransferase</fullName>
        </alternativeName>
        <alternativeName>
            <fullName evidence="1">tRNA-NT</fullName>
        </alternativeName>
    </domain>
    <domain>
        <recommendedName>
            <fullName evidence="1">2'-nucleotidase</fullName>
            <ecNumber evidence="1">3.1.3.-</ecNumber>
        </recommendedName>
    </domain>
    <domain>
        <recommendedName>
            <fullName evidence="1">2',3'-cyclic phosphodiesterase</fullName>
            <ecNumber evidence="1">3.1.4.-</ecNumber>
        </recommendedName>
    </domain>
    <domain>
        <recommendedName>
            <fullName evidence="1">Phosphatase</fullName>
            <ecNumber evidence="1">3.1.3.-</ecNumber>
        </recommendedName>
    </domain>
</protein>